<keyword id="KW-0067">ATP-binding</keyword>
<keyword id="KW-0436">Ligase</keyword>
<keyword id="KW-0460">Magnesium</keyword>
<keyword id="KW-0479">Metal-binding</keyword>
<keyword id="KW-0520">NAD</keyword>
<keyword id="KW-0547">Nucleotide-binding</keyword>
<feature type="chain" id="PRO_1000191505" description="NH(3)-dependent NAD(+) synthetase">
    <location>
        <begin position="1"/>
        <end position="275"/>
    </location>
</feature>
<feature type="binding site" evidence="1">
    <location>
        <begin position="46"/>
        <end position="53"/>
    </location>
    <ligand>
        <name>ATP</name>
        <dbReference type="ChEBI" id="CHEBI:30616"/>
    </ligand>
</feature>
<feature type="binding site" evidence="1">
    <location>
        <position position="52"/>
    </location>
    <ligand>
        <name>Mg(2+)</name>
        <dbReference type="ChEBI" id="CHEBI:18420"/>
    </ligand>
</feature>
<feature type="binding site" evidence="1">
    <location>
        <position position="140"/>
    </location>
    <ligand>
        <name>deamido-NAD(+)</name>
        <dbReference type="ChEBI" id="CHEBI:58437"/>
    </ligand>
</feature>
<feature type="binding site" evidence="1">
    <location>
        <position position="160"/>
    </location>
    <ligand>
        <name>ATP</name>
        <dbReference type="ChEBI" id="CHEBI:30616"/>
    </ligand>
</feature>
<feature type="binding site" evidence="1">
    <location>
        <position position="165"/>
    </location>
    <ligand>
        <name>Mg(2+)</name>
        <dbReference type="ChEBI" id="CHEBI:18420"/>
    </ligand>
</feature>
<feature type="binding site" evidence="1">
    <location>
        <position position="173"/>
    </location>
    <ligand>
        <name>deamido-NAD(+)</name>
        <dbReference type="ChEBI" id="CHEBI:58437"/>
    </ligand>
</feature>
<feature type="binding site" evidence="1">
    <location>
        <position position="180"/>
    </location>
    <ligand>
        <name>deamido-NAD(+)</name>
        <dbReference type="ChEBI" id="CHEBI:58437"/>
    </ligand>
</feature>
<feature type="binding site" evidence="1">
    <location>
        <position position="189"/>
    </location>
    <ligand>
        <name>ATP</name>
        <dbReference type="ChEBI" id="CHEBI:30616"/>
    </ligand>
</feature>
<feature type="binding site" evidence="1">
    <location>
        <position position="211"/>
    </location>
    <ligand>
        <name>ATP</name>
        <dbReference type="ChEBI" id="CHEBI:30616"/>
    </ligand>
</feature>
<feature type="binding site" evidence="1">
    <location>
        <begin position="260"/>
        <end position="261"/>
    </location>
    <ligand>
        <name>deamido-NAD(+)</name>
        <dbReference type="ChEBI" id="CHEBI:58437"/>
    </ligand>
</feature>
<evidence type="ECO:0000255" key="1">
    <source>
        <dbReference type="HAMAP-Rule" id="MF_00193"/>
    </source>
</evidence>
<comment type="function">
    <text evidence="1">Catalyzes the ATP-dependent amidation of deamido-NAD to form NAD. Uses ammonia as a nitrogen source.</text>
</comment>
<comment type="catalytic activity">
    <reaction evidence="1">
        <text>deamido-NAD(+) + NH4(+) + ATP = AMP + diphosphate + NAD(+) + H(+)</text>
        <dbReference type="Rhea" id="RHEA:21188"/>
        <dbReference type="ChEBI" id="CHEBI:15378"/>
        <dbReference type="ChEBI" id="CHEBI:28938"/>
        <dbReference type="ChEBI" id="CHEBI:30616"/>
        <dbReference type="ChEBI" id="CHEBI:33019"/>
        <dbReference type="ChEBI" id="CHEBI:57540"/>
        <dbReference type="ChEBI" id="CHEBI:58437"/>
        <dbReference type="ChEBI" id="CHEBI:456215"/>
        <dbReference type="EC" id="6.3.1.5"/>
    </reaction>
</comment>
<comment type="pathway">
    <text evidence="1">Cofactor biosynthesis; NAD(+) biosynthesis; NAD(+) from deamido-NAD(+) (ammonia route): step 1/1.</text>
</comment>
<comment type="subunit">
    <text evidence="1">Homodimer.</text>
</comment>
<comment type="similarity">
    <text evidence="1">Belongs to the NAD synthetase family.</text>
</comment>
<proteinExistence type="inferred from homology"/>
<protein>
    <recommendedName>
        <fullName evidence="1">NH(3)-dependent NAD(+) synthetase</fullName>
        <ecNumber evidence="1">6.3.1.5</ecNumber>
    </recommendedName>
</protein>
<organism>
    <name type="scientific">Salmonella paratyphi C (strain RKS4594)</name>
    <dbReference type="NCBI Taxonomy" id="476213"/>
    <lineage>
        <taxon>Bacteria</taxon>
        <taxon>Pseudomonadati</taxon>
        <taxon>Pseudomonadota</taxon>
        <taxon>Gammaproteobacteria</taxon>
        <taxon>Enterobacterales</taxon>
        <taxon>Enterobacteriaceae</taxon>
        <taxon>Salmonella</taxon>
    </lineage>
</organism>
<name>NADE_SALPC</name>
<sequence length="275" mass="30484">MTLQQEIIQALGAKPHINPEEEIRRSVDFLKAYLKTYPFLKSLVLGISGGQDSTLAGKLSQMAIAELREETGDNALQFIAVRLPYGVQADEQDCQDAIAFIQPDRVLTVNIKGAVLASEQALREAGIELSDFVRGNEKARERMKAQYSIAGMTHGVVVGTDHAAEAITGFFTKYGDGGTDINPLHRLNKRQGKQLLAALGCPEHLYKKVPTADLEDDRPSLPDEAALGVTYDNIDDYLEGKTLDPAIAKTIEGWYVKTEHKRRLPITVFDDFWKR</sequence>
<gene>
    <name evidence="1" type="primary">nadE</name>
    <name type="ordered locus">SPC_2420</name>
</gene>
<accession>C0Q6X4</accession>
<reference key="1">
    <citation type="journal article" date="2009" name="PLoS ONE">
        <title>Salmonella paratyphi C: genetic divergence from Salmonella choleraesuis and pathogenic convergence with Salmonella typhi.</title>
        <authorList>
            <person name="Liu W.-Q."/>
            <person name="Feng Y."/>
            <person name="Wang Y."/>
            <person name="Zou Q.-H."/>
            <person name="Chen F."/>
            <person name="Guo J.-T."/>
            <person name="Peng Y.-H."/>
            <person name="Jin Y."/>
            <person name="Li Y.-G."/>
            <person name="Hu S.-N."/>
            <person name="Johnston R.N."/>
            <person name="Liu G.-R."/>
            <person name="Liu S.-L."/>
        </authorList>
    </citation>
    <scope>NUCLEOTIDE SEQUENCE [LARGE SCALE GENOMIC DNA]</scope>
    <source>
        <strain>RKS4594</strain>
    </source>
</reference>
<dbReference type="EC" id="6.3.1.5" evidence="1"/>
<dbReference type="EMBL" id="CP000857">
    <property type="protein sequence ID" value="ACN46532.1"/>
    <property type="molecule type" value="Genomic_DNA"/>
</dbReference>
<dbReference type="RefSeq" id="WP_000174981.1">
    <property type="nucleotide sequence ID" value="NC_012125.1"/>
</dbReference>
<dbReference type="SMR" id="C0Q6X4"/>
<dbReference type="KEGG" id="sei:SPC_2420"/>
<dbReference type="HOGENOM" id="CLU_059327_3_0_6"/>
<dbReference type="UniPathway" id="UPA00253">
    <property type="reaction ID" value="UER00333"/>
</dbReference>
<dbReference type="Proteomes" id="UP000001599">
    <property type="component" value="Chromosome"/>
</dbReference>
<dbReference type="GO" id="GO:0005737">
    <property type="term" value="C:cytoplasm"/>
    <property type="evidence" value="ECO:0007669"/>
    <property type="project" value="InterPro"/>
</dbReference>
<dbReference type="GO" id="GO:0005524">
    <property type="term" value="F:ATP binding"/>
    <property type="evidence" value="ECO:0007669"/>
    <property type="project" value="UniProtKB-UniRule"/>
</dbReference>
<dbReference type="GO" id="GO:0004359">
    <property type="term" value="F:glutaminase activity"/>
    <property type="evidence" value="ECO:0007669"/>
    <property type="project" value="InterPro"/>
</dbReference>
<dbReference type="GO" id="GO:0046872">
    <property type="term" value="F:metal ion binding"/>
    <property type="evidence" value="ECO:0007669"/>
    <property type="project" value="UniProtKB-KW"/>
</dbReference>
<dbReference type="GO" id="GO:0003952">
    <property type="term" value="F:NAD+ synthase (glutamine-hydrolyzing) activity"/>
    <property type="evidence" value="ECO:0007669"/>
    <property type="project" value="InterPro"/>
</dbReference>
<dbReference type="GO" id="GO:0008795">
    <property type="term" value="F:NAD+ synthase activity"/>
    <property type="evidence" value="ECO:0007669"/>
    <property type="project" value="UniProtKB-UniRule"/>
</dbReference>
<dbReference type="GO" id="GO:0009435">
    <property type="term" value="P:NAD biosynthetic process"/>
    <property type="evidence" value="ECO:0007669"/>
    <property type="project" value="UniProtKB-UniRule"/>
</dbReference>
<dbReference type="CDD" id="cd00553">
    <property type="entry name" value="NAD_synthase"/>
    <property type="match status" value="1"/>
</dbReference>
<dbReference type="FunFam" id="3.40.50.620:FF:000015">
    <property type="entry name" value="NH(3)-dependent NAD(+) synthetase"/>
    <property type="match status" value="1"/>
</dbReference>
<dbReference type="Gene3D" id="3.40.50.620">
    <property type="entry name" value="HUPs"/>
    <property type="match status" value="1"/>
</dbReference>
<dbReference type="HAMAP" id="MF_00193">
    <property type="entry name" value="NadE_ammonia_dep"/>
    <property type="match status" value="1"/>
</dbReference>
<dbReference type="InterPro" id="IPR022310">
    <property type="entry name" value="NAD/GMP_synthase"/>
</dbReference>
<dbReference type="InterPro" id="IPR003694">
    <property type="entry name" value="NAD_synthase"/>
</dbReference>
<dbReference type="InterPro" id="IPR022926">
    <property type="entry name" value="NH(3)-dep_NAD(+)_synth"/>
</dbReference>
<dbReference type="InterPro" id="IPR014729">
    <property type="entry name" value="Rossmann-like_a/b/a_fold"/>
</dbReference>
<dbReference type="NCBIfam" id="TIGR00552">
    <property type="entry name" value="nadE"/>
    <property type="match status" value="1"/>
</dbReference>
<dbReference type="NCBIfam" id="NF001979">
    <property type="entry name" value="PRK00768.1"/>
    <property type="match status" value="1"/>
</dbReference>
<dbReference type="PANTHER" id="PTHR23090">
    <property type="entry name" value="NH 3 /GLUTAMINE-DEPENDENT NAD + SYNTHETASE"/>
    <property type="match status" value="1"/>
</dbReference>
<dbReference type="PANTHER" id="PTHR23090:SF7">
    <property type="entry name" value="NH(3)-DEPENDENT NAD(+) SYNTHETASE"/>
    <property type="match status" value="1"/>
</dbReference>
<dbReference type="Pfam" id="PF02540">
    <property type="entry name" value="NAD_synthase"/>
    <property type="match status" value="1"/>
</dbReference>
<dbReference type="SUPFAM" id="SSF52402">
    <property type="entry name" value="Adenine nucleotide alpha hydrolases-like"/>
    <property type="match status" value="1"/>
</dbReference>